<name>LPXD_ACIET</name>
<keyword id="KW-0012">Acyltransferase</keyword>
<keyword id="KW-0441">Lipid A biosynthesis</keyword>
<keyword id="KW-0444">Lipid biosynthesis</keyword>
<keyword id="KW-0443">Lipid metabolism</keyword>
<keyword id="KW-1185">Reference proteome</keyword>
<keyword id="KW-0677">Repeat</keyword>
<keyword id="KW-0808">Transferase</keyword>
<sequence length="326" mass="34504">MSLRLGQIVDALGGSLEGGERDTEILRIAPLESSGPGDLSFLSNPRYQSQLAASQAACVIVAPAMRNAALERGACIVVEQPYTYFAHVTQLWVRAHGQGAPAGIHPSAVVDPQARVAPTASIGPLCVVERGAVIGAHTVLKSRVTVGERCTVGERCILHPGVVIGADGFGFAQQRGEWIKIEQLGAVRIGNDVEIGANTCIDRGALDDTVIEDGVKLDNLIQIAHNVHIGRHTAMAGCSAVAGSTRIGAHCTIAGAASIVGHLQLADNVHISTNTVVTHSITQPGQYTGVFPMDDNAKWEKNAATLRQLYRLRERIKALEQTRKDG</sequence>
<reference key="1">
    <citation type="submission" date="2009-01" db="EMBL/GenBank/DDBJ databases">
        <title>Complete sequence of Diaphorobacter sp. TPSY.</title>
        <authorList>
            <consortium name="US DOE Joint Genome Institute"/>
            <person name="Lucas S."/>
            <person name="Copeland A."/>
            <person name="Lapidus A."/>
            <person name="Glavina del Rio T."/>
            <person name="Tice H."/>
            <person name="Bruce D."/>
            <person name="Goodwin L."/>
            <person name="Pitluck S."/>
            <person name="Chertkov O."/>
            <person name="Brettin T."/>
            <person name="Detter J.C."/>
            <person name="Han C."/>
            <person name="Larimer F."/>
            <person name="Land M."/>
            <person name="Hauser L."/>
            <person name="Kyrpides N."/>
            <person name="Mikhailova N."/>
            <person name="Coates J.D."/>
        </authorList>
    </citation>
    <scope>NUCLEOTIDE SEQUENCE [LARGE SCALE GENOMIC DNA]</scope>
    <source>
        <strain>TPSY</strain>
    </source>
</reference>
<proteinExistence type="inferred from homology"/>
<dbReference type="EC" id="2.3.1.191" evidence="1"/>
<dbReference type="EMBL" id="CP001392">
    <property type="protein sequence ID" value="ACM32700.1"/>
    <property type="molecule type" value="Genomic_DNA"/>
</dbReference>
<dbReference type="RefSeq" id="WP_011805770.1">
    <property type="nucleotide sequence ID" value="NC_011992.1"/>
</dbReference>
<dbReference type="SMR" id="B9MGM7"/>
<dbReference type="KEGG" id="dia:Dtpsy_1233"/>
<dbReference type="eggNOG" id="COG1044">
    <property type="taxonomic scope" value="Bacteria"/>
</dbReference>
<dbReference type="HOGENOM" id="CLU_049865_0_0_4"/>
<dbReference type="UniPathway" id="UPA00973"/>
<dbReference type="Proteomes" id="UP000000450">
    <property type="component" value="Chromosome"/>
</dbReference>
<dbReference type="GO" id="GO:0016020">
    <property type="term" value="C:membrane"/>
    <property type="evidence" value="ECO:0007669"/>
    <property type="project" value="GOC"/>
</dbReference>
<dbReference type="GO" id="GO:0016410">
    <property type="term" value="F:N-acyltransferase activity"/>
    <property type="evidence" value="ECO:0007669"/>
    <property type="project" value="InterPro"/>
</dbReference>
<dbReference type="GO" id="GO:0009245">
    <property type="term" value="P:lipid A biosynthetic process"/>
    <property type="evidence" value="ECO:0007669"/>
    <property type="project" value="UniProtKB-UniRule"/>
</dbReference>
<dbReference type="CDD" id="cd03352">
    <property type="entry name" value="LbH_LpxD"/>
    <property type="match status" value="1"/>
</dbReference>
<dbReference type="Gene3D" id="2.160.10.10">
    <property type="entry name" value="Hexapeptide repeat proteins"/>
    <property type="match status" value="1"/>
</dbReference>
<dbReference type="Gene3D" id="3.40.1390.10">
    <property type="entry name" value="MurE/MurF, N-terminal domain"/>
    <property type="match status" value="1"/>
</dbReference>
<dbReference type="HAMAP" id="MF_00523">
    <property type="entry name" value="LpxD"/>
    <property type="match status" value="1"/>
</dbReference>
<dbReference type="InterPro" id="IPR001451">
    <property type="entry name" value="Hexapep"/>
</dbReference>
<dbReference type="InterPro" id="IPR018357">
    <property type="entry name" value="Hexapep_transf_CS"/>
</dbReference>
<dbReference type="InterPro" id="IPR007691">
    <property type="entry name" value="LpxD"/>
</dbReference>
<dbReference type="InterPro" id="IPR011004">
    <property type="entry name" value="Trimer_LpxA-like_sf"/>
</dbReference>
<dbReference type="InterPro" id="IPR020573">
    <property type="entry name" value="UDP_GlcNAc_AcTrfase_non-rep"/>
</dbReference>
<dbReference type="NCBIfam" id="TIGR01853">
    <property type="entry name" value="lipid_A_lpxD"/>
    <property type="match status" value="1"/>
</dbReference>
<dbReference type="NCBIfam" id="NF002060">
    <property type="entry name" value="PRK00892.1"/>
    <property type="match status" value="1"/>
</dbReference>
<dbReference type="PANTHER" id="PTHR43378">
    <property type="entry name" value="UDP-3-O-ACYLGLUCOSAMINE N-ACYLTRANSFERASE"/>
    <property type="match status" value="1"/>
</dbReference>
<dbReference type="PANTHER" id="PTHR43378:SF2">
    <property type="entry name" value="UDP-3-O-ACYLGLUCOSAMINE N-ACYLTRANSFERASE 1, MITOCHONDRIAL-RELATED"/>
    <property type="match status" value="1"/>
</dbReference>
<dbReference type="Pfam" id="PF00132">
    <property type="entry name" value="Hexapep"/>
    <property type="match status" value="1"/>
</dbReference>
<dbReference type="Pfam" id="PF04613">
    <property type="entry name" value="LpxD"/>
    <property type="match status" value="1"/>
</dbReference>
<dbReference type="SUPFAM" id="SSF51161">
    <property type="entry name" value="Trimeric LpxA-like enzymes"/>
    <property type="match status" value="1"/>
</dbReference>
<dbReference type="PROSITE" id="PS00101">
    <property type="entry name" value="HEXAPEP_TRANSFERASES"/>
    <property type="match status" value="1"/>
</dbReference>
<accession>B9MGM7</accession>
<comment type="function">
    <text evidence="1">Catalyzes the N-acylation of UDP-3-O-acylglucosamine using 3-hydroxyacyl-ACP as the acyl donor. Is involved in the biosynthesis of lipid A, a phosphorylated glycolipid that anchors the lipopolysaccharide to the outer membrane of the cell.</text>
</comment>
<comment type="catalytic activity">
    <reaction evidence="1">
        <text>a UDP-3-O-[(3R)-3-hydroxyacyl]-alpha-D-glucosamine + a (3R)-hydroxyacyl-[ACP] = a UDP-2-N,3-O-bis[(3R)-3-hydroxyacyl]-alpha-D-glucosamine + holo-[ACP] + H(+)</text>
        <dbReference type="Rhea" id="RHEA:53836"/>
        <dbReference type="Rhea" id="RHEA-COMP:9685"/>
        <dbReference type="Rhea" id="RHEA-COMP:9945"/>
        <dbReference type="ChEBI" id="CHEBI:15378"/>
        <dbReference type="ChEBI" id="CHEBI:64479"/>
        <dbReference type="ChEBI" id="CHEBI:78827"/>
        <dbReference type="ChEBI" id="CHEBI:137740"/>
        <dbReference type="ChEBI" id="CHEBI:137748"/>
        <dbReference type="EC" id="2.3.1.191"/>
    </reaction>
</comment>
<comment type="pathway">
    <text evidence="1">Bacterial outer membrane biogenesis; LPS lipid A biosynthesis.</text>
</comment>
<comment type="subunit">
    <text evidence="1">Homotrimer.</text>
</comment>
<comment type="similarity">
    <text evidence="1">Belongs to the transferase hexapeptide repeat family. LpxD subfamily.</text>
</comment>
<protein>
    <recommendedName>
        <fullName evidence="1">UDP-3-O-acylglucosamine N-acyltransferase</fullName>
        <ecNumber evidence="1">2.3.1.191</ecNumber>
    </recommendedName>
</protein>
<gene>
    <name evidence="1" type="primary">lpxD</name>
    <name type="ordered locus">Dtpsy_1233</name>
</gene>
<feature type="chain" id="PRO_1000190893" description="UDP-3-O-acylglucosamine N-acyltransferase">
    <location>
        <begin position="1"/>
        <end position="326"/>
    </location>
</feature>
<feature type="active site" description="Proton acceptor" evidence="1">
    <location>
        <position position="225"/>
    </location>
</feature>
<organism>
    <name type="scientific">Acidovorax ebreus (strain TPSY)</name>
    <name type="common">Diaphorobacter sp. (strain TPSY)</name>
    <dbReference type="NCBI Taxonomy" id="535289"/>
    <lineage>
        <taxon>Bacteria</taxon>
        <taxon>Pseudomonadati</taxon>
        <taxon>Pseudomonadota</taxon>
        <taxon>Betaproteobacteria</taxon>
        <taxon>Burkholderiales</taxon>
        <taxon>Comamonadaceae</taxon>
        <taxon>Diaphorobacter</taxon>
    </lineage>
</organism>
<evidence type="ECO:0000255" key="1">
    <source>
        <dbReference type="HAMAP-Rule" id="MF_00523"/>
    </source>
</evidence>